<sequence length="284" mass="30795">MKQKVVSIGDINVANDLPFVLFGGMNVLESRDLAMRICEHYVTVTQKLGIPYVFKASFDKANRSSIHSYRGPGLEEGMKIFQELKQTFGVKVITDVHEASQAQPVADVVDVIQLPAFLARQTDLVEAMAKTGAVINVKKPQFVSPGQMGNIVDKFHEGGNDKVILCDRGANFGYDNLVVDMLGFSVMKKVSGNSPVIFDVTHALQCRDPFGAASGGRRAQVTELARAGMAVGLAGLFIEAHPDPEHAKCDGPSALPLAKLEPFLKQIKAIDDLVKSFGELDTEH</sequence>
<evidence type="ECO:0000255" key="1">
    <source>
        <dbReference type="HAMAP-Rule" id="MF_00056"/>
    </source>
</evidence>
<reference key="1">
    <citation type="submission" date="2007-08" db="EMBL/GenBank/DDBJ databases">
        <authorList>
            <consortium name="The Citrobacter koseri Genome Sequencing Project"/>
            <person name="McClelland M."/>
            <person name="Sanderson E.K."/>
            <person name="Porwollik S."/>
            <person name="Spieth J."/>
            <person name="Clifton W.S."/>
            <person name="Latreille P."/>
            <person name="Courtney L."/>
            <person name="Wang C."/>
            <person name="Pepin K."/>
            <person name="Bhonagiri V."/>
            <person name="Nash W."/>
            <person name="Johnson M."/>
            <person name="Thiruvilangam P."/>
            <person name="Wilson R."/>
        </authorList>
    </citation>
    <scope>NUCLEOTIDE SEQUENCE [LARGE SCALE GENOMIC DNA]</scope>
    <source>
        <strain>ATCC BAA-895 / CDC 4225-83 / SGSC4696</strain>
    </source>
</reference>
<gene>
    <name evidence="1" type="primary">kdsA</name>
    <name type="ordered locus">CKO_01279</name>
</gene>
<dbReference type="EC" id="2.5.1.55" evidence="1"/>
<dbReference type="EMBL" id="CP000822">
    <property type="protein sequence ID" value="ABV12419.1"/>
    <property type="molecule type" value="Genomic_DNA"/>
</dbReference>
<dbReference type="RefSeq" id="WP_012132162.1">
    <property type="nucleotide sequence ID" value="NC_009792.1"/>
</dbReference>
<dbReference type="SMR" id="A8AG06"/>
<dbReference type="STRING" id="290338.CKO_01279"/>
<dbReference type="GeneID" id="45135395"/>
<dbReference type="KEGG" id="cko:CKO_01279"/>
<dbReference type="HOGENOM" id="CLU_036666_0_0_6"/>
<dbReference type="OrthoDB" id="9776934at2"/>
<dbReference type="UniPathway" id="UPA00030"/>
<dbReference type="UniPathway" id="UPA00357">
    <property type="reaction ID" value="UER00474"/>
</dbReference>
<dbReference type="Proteomes" id="UP000008148">
    <property type="component" value="Chromosome"/>
</dbReference>
<dbReference type="GO" id="GO:0005737">
    <property type="term" value="C:cytoplasm"/>
    <property type="evidence" value="ECO:0007669"/>
    <property type="project" value="UniProtKB-SubCell"/>
</dbReference>
<dbReference type="GO" id="GO:0008676">
    <property type="term" value="F:3-deoxy-8-phosphooctulonate synthase activity"/>
    <property type="evidence" value="ECO:0007669"/>
    <property type="project" value="UniProtKB-UniRule"/>
</dbReference>
<dbReference type="GO" id="GO:0019294">
    <property type="term" value="P:keto-3-deoxy-D-manno-octulosonic acid biosynthetic process"/>
    <property type="evidence" value="ECO:0007669"/>
    <property type="project" value="UniProtKB-UniRule"/>
</dbReference>
<dbReference type="FunFam" id="3.20.20.70:FF:000058">
    <property type="entry name" value="2-dehydro-3-deoxyphosphooctonate aldolase"/>
    <property type="match status" value="1"/>
</dbReference>
<dbReference type="Gene3D" id="3.20.20.70">
    <property type="entry name" value="Aldolase class I"/>
    <property type="match status" value="1"/>
</dbReference>
<dbReference type="HAMAP" id="MF_00056">
    <property type="entry name" value="KDO8P_synth"/>
    <property type="match status" value="1"/>
</dbReference>
<dbReference type="InterPro" id="IPR013785">
    <property type="entry name" value="Aldolase_TIM"/>
</dbReference>
<dbReference type="InterPro" id="IPR006218">
    <property type="entry name" value="DAHP1/KDSA"/>
</dbReference>
<dbReference type="InterPro" id="IPR006269">
    <property type="entry name" value="KDO8P_synthase"/>
</dbReference>
<dbReference type="NCBIfam" id="TIGR01362">
    <property type="entry name" value="KDO8P_synth"/>
    <property type="match status" value="1"/>
</dbReference>
<dbReference type="NCBIfam" id="NF003543">
    <property type="entry name" value="PRK05198.1"/>
    <property type="match status" value="1"/>
</dbReference>
<dbReference type="NCBIfam" id="NF009109">
    <property type="entry name" value="PRK12457.1"/>
    <property type="match status" value="1"/>
</dbReference>
<dbReference type="PANTHER" id="PTHR21057">
    <property type="entry name" value="PHOSPHO-2-DEHYDRO-3-DEOXYHEPTONATE ALDOLASE"/>
    <property type="match status" value="1"/>
</dbReference>
<dbReference type="Pfam" id="PF00793">
    <property type="entry name" value="DAHP_synth_1"/>
    <property type="match status" value="1"/>
</dbReference>
<dbReference type="SUPFAM" id="SSF51569">
    <property type="entry name" value="Aldolase"/>
    <property type="match status" value="1"/>
</dbReference>
<proteinExistence type="inferred from homology"/>
<keyword id="KW-0963">Cytoplasm</keyword>
<keyword id="KW-0448">Lipopolysaccharide biosynthesis</keyword>
<keyword id="KW-1185">Reference proteome</keyword>
<keyword id="KW-0808">Transferase</keyword>
<accession>A8AG06</accession>
<name>KDSA_CITK8</name>
<comment type="catalytic activity">
    <reaction evidence="1">
        <text>D-arabinose 5-phosphate + phosphoenolpyruvate + H2O = 3-deoxy-alpha-D-manno-2-octulosonate-8-phosphate + phosphate</text>
        <dbReference type="Rhea" id="RHEA:14053"/>
        <dbReference type="ChEBI" id="CHEBI:15377"/>
        <dbReference type="ChEBI" id="CHEBI:43474"/>
        <dbReference type="ChEBI" id="CHEBI:57693"/>
        <dbReference type="ChEBI" id="CHEBI:58702"/>
        <dbReference type="ChEBI" id="CHEBI:85985"/>
        <dbReference type="EC" id="2.5.1.55"/>
    </reaction>
</comment>
<comment type="pathway">
    <text evidence="1">Carbohydrate biosynthesis; 3-deoxy-D-manno-octulosonate biosynthesis; 3-deoxy-D-manno-octulosonate from D-ribulose 5-phosphate: step 2/3.</text>
</comment>
<comment type="pathway">
    <text evidence="1">Bacterial outer membrane biogenesis; lipopolysaccharide biosynthesis.</text>
</comment>
<comment type="subcellular location">
    <subcellularLocation>
        <location evidence="1">Cytoplasm</location>
    </subcellularLocation>
</comment>
<comment type="similarity">
    <text evidence="1">Belongs to the KdsA family.</text>
</comment>
<protein>
    <recommendedName>
        <fullName evidence="1">2-dehydro-3-deoxyphosphooctonate aldolase</fullName>
        <ecNumber evidence="1">2.5.1.55</ecNumber>
    </recommendedName>
    <alternativeName>
        <fullName evidence="1">3-deoxy-D-manno-octulosonic acid 8-phosphate synthase</fullName>
    </alternativeName>
    <alternativeName>
        <fullName evidence="1">KDO-8-phosphate synthase</fullName>
        <shortName evidence="1">KDO 8-P synthase</shortName>
        <shortName evidence="1">KDOPS</shortName>
    </alternativeName>
    <alternativeName>
        <fullName evidence="1">Phospho-2-dehydro-3-deoxyoctonate aldolase</fullName>
    </alternativeName>
</protein>
<organism>
    <name type="scientific">Citrobacter koseri (strain ATCC BAA-895 / CDC 4225-83 / SGSC4696)</name>
    <dbReference type="NCBI Taxonomy" id="290338"/>
    <lineage>
        <taxon>Bacteria</taxon>
        <taxon>Pseudomonadati</taxon>
        <taxon>Pseudomonadota</taxon>
        <taxon>Gammaproteobacteria</taxon>
        <taxon>Enterobacterales</taxon>
        <taxon>Enterobacteriaceae</taxon>
        <taxon>Citrobacter</taxon>
    </lineage>
</organism>
<feature type="chain" id="PRO_1000003333" description="2-dehydro-3-deoxyphosphooctonate aldolase">
    <location>
        <begin position="1"/>
        <end position="284"/>
    </location>
</feature>